<gene>
    <name type="primary">sdhD</name>
    <name type="ordered locus">Ta1004</name>
</gene>
<protein>
    <recommendedName>
        <fullName>Succinate dehydrogenase hydrophobic membrane anchor subunit</fullName>
    </recommendedName>
</protein>
<organism>
    <name type="scientific">Thermoplasma acidophilum (strain ATCC 25905 / DSM 1728 / JCM 9062 / NBRC 15155 / AMRC-C165)</name>
    <dbReference type="NCBI Taxonomy" id="273075"/>
    <lineage>
        <taxon>Archaea</taxon>
        <taxon>Methanobacteriati</taxon>
        <taxon>Thermoplasmatota</taxon>
        <taxon>Thermoplasmata</taxon>
        <taxon>Thermoplasmatales</taxon>
        <taxon>Thermoplasmataceae</taxon>
        <taxon>Thermoplasma</taxon>
    </lineage>
</organism>
<dbReference type="EMBL" id="X70908">
    <property type="protein sequence ID" value="CAA50264.1"/>
    <property type="molecule type" value="Genomic_DNA"/>
</dbReference>
<dbReference type="EMBL" id="AL445066">
    <property type="protein sequence ID" value="CAC12133.1"/>
    <property type="molecule type" value="Genomic_DNA"/>
</dbReference>
<dbReference type="PIR" id="S34621">
    <property type="entry name" value="S34621"/>
</dbReference>
<dbReference type="RefSeq" id="WP_010901415.1">
    <property type="nucleotide sequence ID" value="NC_002578.1"/>
</dbReference>
<dbReference type="SMR" id="Q08717"/>
<dbReference type="STRING" id="273075.gene:9572223"/>
<dbReference type="PaxDb" id="273075-Ta1004"/>
<dbReference type="EnsemblBacteria" id="CAC12133">
    <property type="protein sequence ID" value="CAC12133"/>
    <property type="gene ID" value="CAC12133"/>
</dbReference>
<dbReference type="KEGG" id="tac:Ta1004"/>
<dbReference type="eggNOG" id="arCOG04162">
    <property type="taxonomic scope" value="Archaea"/>
</dbReference>
<dbReference type="HOGENOM" id="CLU_2010222_0_0_2"/>
<dbReference type="InParanoid" id="Q08717"/>
<dbReference type="OrthoDB" id="56467at2157"/>
<dbReference type="UniPathway" id="UPA00223"/>
<dbReference type="Proteomes" id="UP000001024">
    <property type="component" value="Chromosome"/>
</dbReference>
<dbReference type="GO" id="GO:0005886">
    <property type="term" value="C:plasma membrane"/>
    <property type="evidence" value="ECO:0007669"/>
    <property type="project" value="UniProtKB-SubCell"/>
</dbReference>
<dbReference type="GO" id="GO:0009055">
    <property type="term" value="F:electron transfer activity"/>
    <property type="evidence" value="ECO:0007669"/>
    <property type="project" value="InterPro"/>
</dbReference>
<dbReference type="GO" id="GO:0046872">
    <property type="term" value="F:metal ion binding"/>
    <property type="evidence" value="ECO:0007669"/>
    <property type="project" value="UniProtKB-KW"/>
</dbReference>
<dbReference type="GO" id="GO:0006099">
    <property type="term" value="P:tricarboxylic acid cycle"/>
    <property type="evidence" value="ECO:0007669"/>
    <property type="project" value="UniProtKB-UniPathway"/>
</dbReference>
<dbReference type="CDD" id="cd03500">
    <property type="entry name" value="SQR_TypeA_SdhD_like"/>
    <property type="match status" value="1"/>
</dbReference>
<dbReference type="Gene3D" id="1.20.1300.10">
    <property type="entry name" value="Fumarate reductase/succinate dehydrogenase, transmembrane subunit"/>
    <property type="match status" value="1"/>
</dbReference>
<dbReference type="InterPro" id="IPR034804">
    <property type="entry name" value="SQR/QFR_C/D"/>
</dbReference>
<dbReference type="InterPro" id="IPR014314">
    <property type="entry name" value="Succ_DH_cytb556"/>
</dbReference>
<dbReference type="InterPro" id="IPR000701">
    <property type="entry name" value="SuccDH_FuR_B_TM-su"/>
</dbReference>
<dbReference type="Pfam" id="PF01127">
    <property type="entry name" value="Sdh_cyt"/>
    <property type="match status" value="1"/>
</dbReference>
<dbReference type="PIRSF" id="PIRSF000178">
    <property type="entry name" value="SDH_cyt_b560"/>
    <property type="match status" value="1"/>
</dbReference>
<dbReference type="SUPFAM" id="SSF81343">
    <property type="entry name" value="Fumarate reductase respiratory complex transmembrane subunits"/>
    <property type="match status" value="1"/>
</dbReference>
<keyword id="KW-1003">Cell membrane</keyword>
<keyword id="KW-0249">Electron transport</keyword>
<keyword id="KW-0349">Heme</keyword>
<keyword id="KW-0408">Iron</keyword>
<keyword id="KW-0472">Membrane</keyword>
<keyword id="KW-0479">Metal-binding</keyword>
<keyword id="KW-1185">Reference proteome</keyword>
<keyword id="KW-0812">Transmembrane</keyword>
<keyword id="KW-1133">Transmembrane helix</keyword>
<keyword id="KW-0813">Transport</keyword>
<keyword id="KW-0816">Tricarboxylic acid cycle</keyword>
<accession>Q08717</accession>
<sequence>MAETEKMKYGSLNRFAQAVTGLFLLFFLGVHLYVAHIDFGHPVAFFSSVINQLHNPWWLAFFLIFVYIITYHGINGLNHIVADTSISEKAKRNIGIALMVIYVITIIYGTILALLVARMTVPT</sequence>
<feature type="chain" id="PRO_0000158682" description="Succinate dehydrogenase hydrophobic membrane anchor subunit">
    <location>
        <begin position="1"/>
        <end position="123"/>
    </location>
</feature>
<feature type="topological domain" description="Cytoplasmic" evidence="2">
    <location>
        <begin position="1"/>
        <end position="13"/>
    </location>
</feature>
<feature type="transmembrane region" description="Helical" evidence="2">
    <location>
        <begin position="14"/>
        <end position="34"/>
    </location>
</feature>
<feature type="topological domain" description="Extracellular" evidence="2">
    <location>
        <begin position="35"/>
        <end position="59"/>
    </location>
</feature>
<feature type="transmembrane region" description="Helical" evidence="2">
    <location>
        <begin position="60"/>
        <end position="81"/>
    </location>
</feature>
<feature type="topological domain" description="Cytoplasmic" evidence="2">
    <location>
        <begin position="82"/>
        <end position="91"/>
    </location>
</feature>
<feature type="transmembrane region" description="Helical" evidence="2">
    <location>
        <begin position="92"/>
        <end position="116"/>
    </location>
</feature>
<feature type="binding site" description="axial binding residue" evidence="1">
    <location>
        <position position="72"/>
    </location>
    <ligand>
        <name>heme</name>
        <dbReference type="ChEBI" id="CHEBI:30413"/>
        <note>ligand shared with second transmembrane subunit</note>
    </ligand>
    <ligandPart>
        <name>Fe</name>
        <dbReference type="ChEBI" id="CHEBI:18248"/>
    </ligandPart>
</feature>
<proteinExistence type="inferred from homology"/>
<comment type="function">
    <text evidence="1">Membrane-anchoring subunit of succinate dehydrogenase (SDH).</text>
</comment>
<comment type="cofactor">
    <cofactor evidence="1">
        <name>heme</name>
        <dbReference type="ChEBI" id="CHEBI:30413"/>
    </cofactor>
    <text evidence="1">The heme is bound between the two transmembrane subunits.</text>
</comment>
<comment type="pathway">
    <text>Carbohydrate metabolism; tricarboxylic acid cycle.</text>
</comment>
<comment type="subunit">
    <text evidence="1">Part of an enzyme complex containing four subunits: a flavoprotein, an iron-sulfur protein, plus two membrane-anchoring proteins, SdhC and SdhD.</text>
</comment>
<comment type="subcellular location">
    <subcellularLocation>
        <location evidence="3">Cell membrane</location>
        <topology evidence="3">Multi-pass membrane protein</topology>
    </subcellularLocation>
</comment>
<reference key="1">
    <citation type="journal article" date="1993" name="Biochim. Biophys. Acta">
        <title>Nucleotide sequence of a putative succinate dehydrogenase operon in Thermoplasma acidophilum.</title>
        <authorList>
            <person name="Bach M."/>
            <person name="Reilaender H."/>
            <person name="Gaertner P."/>
            <person name="Lottspeich F."/>
            <person name="Michel H."/>
        </authorList>
    </citation>
    <scope>NUCLEOTIDE SEQUENCE [GENOMIC DNA]</scope>
    <source>
        <strain>ATCC 25905 / DSM 1728 / JCM 9062 / NBRC 15155 / AMRC-C165</strain>
    </source>
</reference>
<reference key="2">
    <citation type="journal article" date="2000" name="Nature">
        <title>The genome sequence of the thermoacidophilic scavenger Thermoplasma acidophilum.</title>
        <authorList>
            <person name="Ruepp A."/>
            <person name="Graml W."/>
            <person name="Santos-Martinez M.-L."/>
            <person name="Koretke K.K."/>
            <person name="Volker C."/>
            <person name="Mewes H.-W."/>
            <person name="Frishman D."/>
            <person name="Stocker S."/>
            <person name="Lupas A.N."/>
            <person name="Baumeister W."/>
        </authorList>
    </citation>
    <scope>NUCLEOTIDE SEQUENCE [LARGE SCALE GENOMIC DNA]</scope>
    <source>
        <strain>ATCC 25905 / DSM 1728 / JCM 9062 / NBRC 15155 / AMRC-C165</strain>
    </source>
</reference>
<evidence type="ECO:0000250" key="1"/>
<evidence type="ECO:0000255" key="2"/>
<evidence type="ECO:0000305" key="3"/>
<name>DHSD_THEAC</name>